<organism>
    <name type="scientific">Escherichia coli O6:K15:H31 (strain 536 / UPEC)</name>
    <dbReference type="NCBI Taxonomy" id="362663"/>
    <lineage>
        <taxon>Bacteria</taxon>
        <taxon>Pseudomonadati</taxon>
        <taxon>Pseudomonadota</taxon>
        <taxon>Gammaproteobacteria</taxon>
        <taxon>Enterobacterales</taxon>
        <taxon>Enterobacteriaceae</taxon>
        <taxon>Escherichia</taxon>
    </lineage>
</organism>
<dbReference type="EMBL" id="CP000247">
    <property type="protein sequence ID" value="ABG70647.1"/>
    <property type="molecule type" value="Genomic_DNA"/>
</dbReference>
<dbReference type="RefSeq" id="WP_000140506.1">
    <property type="nucleotide sequence ID" value="NC_008253.1"/>
</dbReference>
<dbReference type="SMR" id="Q0TEI2"/>
<dbReference type="GeneID" id="75172780"/>
<dbReference type="KEGG" id="ecp:ECP_2658"/>
<dbReference type="HOGENOM" id="CLU_066607_3_2_6"/>
<dbReference type="Proteomes" id="UP000009182">
    <property type="component" value="Chromosome"/>
</dbReference>
<dbReference type="GO" id="GO:0005737">
    <property type="term" value="C:cytoplasm"/>
    <property type="evidence" value="ECO:0007669"/>
    <property type="project" value="UniProtKB-SubCell"/>
</dbReference>
<dbReference type="GO" id="GO:0006282">
    <property type="term" value="P:regulation of DNA repair"/>
    <property type="evidence" value="ECO:0007669"/>
    <property type="project" value="UniProtKB-UniRule"/>
</dbReference>
<dbReference type="FunFam" id="1.10.10.10:FF:000133">
    <property type="entry name" value="Regulatory protein RecX"/>
    <property type="match status" value="1"/>
</dbReference>
<dbReference type="FunFam" id="1.10.10.10:FF:000134">
    <property type="entry name" value="Regulatory protein RecX"/>
    <property type="match status" value="1"/>
</dbReference>
<dbReference type="FunFam" id="1.10.10.10:FF:000209">
    <property type="entry name" value="Regulatory protein RecX"/>
    <property type="match status" value="1"/>
</dbReference>
<dbReference type="Gene3D" id="1.10.10.10">
    <property type="entry name" value="Winged helix-like DNA-binding domain superfamily/Winged helix DNA-binding domain"/>
    <property type="match status" value="3"/>
</dbReference>
<dbReference type="HAMAP" id="MF_01114">
    <property type="entry name" value="RecX"/>
    <property type="match status" value="1"/>
</dbReference>
<dbReference type="InterPro" id="IPR053926">
    <property type="entry name" value="RecX_HTH_1st"/>
</dbReference>
<dbReference type="InterPro" id="IPR053924">
    <property type="entry name" value="RecX_HTH_2nd"/>
</dbReference>
<dbReference type="InterPro" id="IPR053925">
    <property type="entry name" value="RecX_HTH_3rd"/>
</dbReference>
<dbReference type="InterPro" id="IPR003783">
    <property type="entry name" value="Regulatory_RecX"/>
</dbReference>
<dbReference type="InterPro" id="IPR036388">
    <property type="entry name" value="WH-like_DNA-bd_sf"/>
</dbReference>
<dbReference type="NCBIfam" id="NF001052">
    <property type="entry name" value="PRK00117.1-1"/>
    <property type="match status" value="1"/>
</dbReference>
<dbReference type="PANTHER" id="PTHR33602">
    <property type="entry name" value="REGULATORY PROTEIN RECX FAMILY PROTEIN"/>
    <property type="match status" value="1"/>
</dbReference>
<dbReference type="PANTHER" id="PTHR33602:SF1">
    <property type="entry name" value="REGULATORY PROTEIN RECX FAMILY PROTEIN"/>
    <property type="match status" value="1"/>
</dbReference>
<dbReference type="Pfam" id="PF21982">
    <property type="entry name" value="RecX_HTH1"/>
    <property type="match status" value="1"/>
</dbReference>
<dbReference type="Pfam" id="PF02631">
    <property type="entry name" value="RecX_HTH2"/>
    <property type="match status" value="1"/>
</dbReference>
<dbReference type="Pfam" id="PF21981">
    <property type="entry name" value="RecX_HTH3"/>
    <property type="match status" value="1"/>
</dbReference>
<keyword id="KW-0963">Cytoplasm</keyword>
<accession>Q0TEI2</accession>
<name>RECX_ECOL5</name>
<protein>
    <recommendedName>
        <fullName evidence="1">Regulatory protein RecX</fullName>
    </recommendedName>
</protein>
<evidence type="ECO:0000255" key="1">
    <source>
        <dbReference type="HAMAP-Rule" id="MF_01114"/>
    </source>
</evidence>
<sequence length="166" mass="19410">MTESTSRRPAYARLLDRAVRILAVRDHSEQELRRKLAAPIMGKNGPEEIDATAEDYERVIAWCHEHGYLDDSRFVARFIASRSRKGYGPARIRQELNQKGISREATEKAMRECDIDWCALARDQATRKYGEPLPTVFSEKVKIQRFLLYRGYLMEDIQDIWRNFAD</sequence>
<feature type="chain" id="PRO_1000065168" description="Regulatory protein RecX">
    <location>
        <begin position="1"/>
        <end position="166"/>
    </location>
</feature>
<reference key="1">
    <citation type="journal article" date="2006" name="Mol. Microbiol.">
        <title>Role of pathogenicity island-associated integrases in the genome plasticity of uropathogenic Escherichia coli strain 536.</title>
        <authorList>
            <person name="Hochhut B."/>
            <person name="Wilde C."/>
            <person name="Balling G."/>
            <person name="Middendorf B."/>
            <person name="Dobrindt U."/>
            <person name="Brzuszkiewicz E."/>
            <person name="Gottschalk G."/>
            <person name="Carniel E."/>
            <person name="Hacker J."/>
        </authorList>
    </citation>
    <scope>NUCLEOTIDE SEQUENCE [LARGE SCALE GENOMIC DNA]</scope>
    <source>
        <strain>536 / UPEC</strain>
    </source>
</reference>
<gene>
    <name evidence="1" type="primary">recX</name>
    <name type="ordered locus">ECP_2658</name>
</gene>
<proteinExistence type="inferred from homology"/>
<comment type="function">
    <text evidence="1">Modulates RecA activity.</text>
</comment>
<comment type="subcellular location">
    <subcellularLocation>
        <location evidence="1">Cytoplasm</location>
    </subcellularLocation>
</comment>
<comment type="similarity">
    <text evidence="1">Belongs to the RecX family.</text>
</comment>